<proteinExistence type="inferred from homology"/>
<accession>B3FIQ7</accession>
<sequence>MNTVRVTFLLVFVLAVSLGQADEDGNRMEKRQKKTEAENLLLPKLEELDAKLWEEDSVESRNSRQKRCNGKDVPCDPDPAKNRRCCSGLECLKPYLHGIWYQDYYCYVEKSGR</sequence>
<evidence type="ECO:0000250" key="1"/>
<evidence type="ECO:0000250" key="2">
    <source>
        <dbReference type="UniProtKB" id="P0CH73"/>
    </source>
</evidence>
<evidence type="ECO:0000255" key="3"/>
<evidence type="ECO:0000303" key="4">
    <source>
    </source>
</evidence>
<evidence type="ECO:0000305" key="5"/>
<feature type="signal peptide" evidence="3">
    <location>
        <begin position="1"/>
        <end position="21"/>
    </location>
</feature>
<feature type="propeptide" id="PRO_0000435165" evidence="2">
    <location>
        <begin position="22"/>
        <end position="67"/>
    </location>
</feature>
<feature type="chain" id="PRO_5002788384" description="U10-theraphotoxin-Hs2a">
    <location>
        <begin position="68"/>
        <end position="113"/>
    </location>
</feature>
<feature type="disulfide bond" evidence="1">
    <location>
        <begin position="68"/>
        <end position="86"/>
    </location>
</feature>
<feature type="disulfide bond" evidence="1">
    <location>
        <begin position="75"/>
        <end position="91"/>
    </location>
</feature>
<feature type="disulfide bond" evidence="1">
    <location>
        <begin position="85"/>
        <end position="106"/>
    </location>
</feature>
<name>TX16C_CYRSC</name>
<organism>
    <name type="scientific">Cyriopagopus schmidti</name>
    <name type="common">Chinese bird spider</name>
    <name type="synonym">Haplopelma schmidti</name>
    <dbReference type="NCBI Taxonomy" id="29017"/>
    <lineage>
        <taxon>Eukaryota</taxon>
        <taxon>Metazoa</taxon>
        <taxon>Ecdysozoa</taxon>
        <taxon>Arthropoda</taxon>
        <taxon>Chelicerata</taxon>
        <taxon>Arachnida</taxon>
        <taxon>Araneae</taxon>
        <taxon>Mygalomorphae</taxon>
        <taxon>Theraphosidae</taxon>
        <taxon>Cyriopagopus</taxon>
    </lineage>
</organism>
<keyword id="KW-0165">Cleavage on pair of basic residues</keyword>
<keyword id="KW-1015">Disulfide bond</keyword>
<keyword id="KW-0872">Ion channel impairing toxin</keyword>
<keyword id="KW-0960">Knottin</keyword>
<keyword id="KW-0964">Secreted</keyword>
<keyword id="KW-0732">Signal</keyword>
<keyword id="KW-0800">Toxin</keyword>
<dbReference type="EMBL" id="EU195251">
    <property type="protein sequence ID" value="ABY77704.1"/>
    <property type="molecule type" value="mRNA"/>
</dbReference>
<dbReference type="ArachnoServer" id="AS000510">
    <property type="toxin name" value="U10-theraphotoxin-Hs2a"/>
</dbReference>
<dbReference type="GO" id="GO:0005576">
    <property type="term" value="C:extracellular region"/>
    <property type="evidence" value="ECO:0007669"/>
    <property type="project" value="UniProtKB-SubCell"/>
</dbReference>
<dbReference type="GO" id="GO:0019871">
    <property type="term" value="F:sodium channel inhibitor activity"/>
    <property type="evidence" value="ECO:0007669"/>
    <property type="project" value="InterPro"/>
</dbReference>
<dbReference type="GO" id="GO:0090729">
    <property type="term" value="F:toxin activity"/>
    <property type="evidence" value="ECO:0007669"/>
    <property type="project" value="UniProtKB-KW"/>
</dbReference>
<dbReference type="InterPro" id="IPR012627">
    <property type="entry name" value="Toxin_22"/>
</dbReference>
<dbReference type="Pfam" id="PF08092">
    <property type="entry name" value="Toxin_22"/>
    <property type="match status" value="1"/>
</dbReference>
<protein>
    <recommendedName>
        <fullName>U10-theraphotoxin-Hs2a</fullName>
        <shortName>U10-TRTX-Hs2a</shortName>
    </recommendedName>
    <alternativeName>
        <fullName evidence="4">HWTX-XVIc</fullName>
    </alternativeName>
</protein>
<reference key="1">
    <citation type="journal article" date="2008" name="Toxicon">
        <title>Molecular diversification based on analysis of expressed sequence tags from the venom glands of the Chinese bird spider Ornithoctonus huwena.</title>
        <authorList>
            <person name="Jiang L."/>
            <person name="Peng L."/>
            <person name="Chen J."/>
            <person name="Zhang Y."/>
            <person name="Xiong X."/>
            <person name="Liang S."/>
        </authorList>
    </citation>
    <scope>NUCLEOTIDE SEQUENCE [MRNA]</scope>
    <source>
        <tissue>Venom gland</tissue>
    </source>
</reference>
<comment type="function">
    <text evidence="1">Probable ion channel inhibitor.</text>
</comment>
<comment type="subcellular location">
    <subcellularLocation>
        <location evidence="2">Secreted</location>
    </subcellularLocation>
</comment>
<comment type="tissue specificity">
    <text evidence="5">Expressed by the venom gland.</text>
</comment>
<comment type="domain">
    <text evidence="1">The presence of a 'disulfide through disulfide knot' structurally defines this protein as a knottin.</text>
</comment>
<comment type="similarity">
    <text evidence="5">Belongs to the neurotoxin 14 (magi-1) family. 02 (HWTX-XVIc) subfamily.</text>
</comment>